<evidence type="ECO:0000255" key="1">
    <source>
        <dbReference type="HAMAP-Rule" id="MF_00839"/>
    </source>
</evidence>
<proteinExistence type="evidence at protein level"/>
<protein>
    <recommendedName>
        <fullName evidence="1">Ribosome hibernation promotion factor</fullName>
        <shortName evidence="1">HPF</shortName>
    </recommendedName>
</protein>
<reference key="1">
    <citation type="journal article" date="2007" name="PLoS ONE">
        <title>Molecular correlates of host specialization in Staphylococcus aureus.</title>
        <authorList>
            <person name="Herron-Olson L."/>
            <person name="Fitzgerald J.R."/>
            <person name="Musser J.M."/>
            <person name="Kapur V."/>
        </authorList>
    </citation>
    <scope>NUCLEOTIDE SEQUENCE [LARGE SCALE GENOMIC DNA]</scope>
    <source>
        <strain>bovine RF122 / ET3-1</strain>
    </source>
</reference>
<feature type="chain" id="PRO_0000291312" description="Ribosome hibernation promotion factor">
    <location>
        <begin position="1"/>
        <end position="190"/>
    </location>
</feature>
<accession>Q2YSH7</accession>
<organism>
    <name type="scientific">Staphylococcus aureus (strain bovine RF122 / ET3-1)</name>
    <dbReference type="NCBI Taxonomy" id="273036"/>
    <lineage>
        <taxon>Bacteria</taxon>
        <taxon>Bacillati</taxon>
        <taxon>Bacillota</taxon>
        <taxon>Bacilli</taxon>
        <taxon>Bacillales</taxon>
        <taxon>Staphylococcaceae</taxon>
        <taxon>Staphylococcus</taxon>
    </lineage>
</organism>
<gene>
    <name evidence="1" type="primary">hpf</name>
    <name type="ordered locus">SAB0704</name>
</gene>
<name>HPF_STAAB</name>
<sequence length="190" mass="22213">MIRFEIHGDNLTITDAIRNYIEEKIGKLERYFNDVPNAVAHVKVKTYSNSATKIEVTIPLKNVTLRAEERNDDLYAGIDLINNKLERQVRKYKTRINRKSRDRGDQEVFVAELQEMQETQVDNDAYDDNEIEIIRSKEFSLKPMDSEEAVLQMNLLGHDFFVFTDRETDGTSIVYRRKDGKYGLIQTSEQ</sequence>
<dbReference type="EMBL" id="AJ938182">
    <property type="protein sequence ID" value="CAI80392.1"/>
    <property type="molecule type" value="Genomic_DNA"/>
</dbReference>
<dbReference type="RefSeq" id="WP_000617735.1">
    <property type="nucleotide sequence ID" value="NC_007622.1"/>
</dbReference>
<dbReference type="PDB" id="6FXC">
    <property type="method" value="EM"/>
    <property type="resolution" value="6.76 A"/>
    <property type="chains" value="Av/Bv=1-190"/>
</dbReference>
<dbReference type="PDBsum" id="6FXC"/>
<dbReference type="EMDB" id="EMD-3637"/>
<dbReference type="SMR" id="Q2YSH7"/>
<dbReference type="KEGG" id="sab:SAB0704"/>
<dbReference type="HOGENOM" id="CLU_071472_0_3_9"/>
<dbReference type="GO" id="GO:0022627">
    <property type="term" value="C:cytosolic small ribosomal subunit"/>
    <property type="evidence" value="ECO:0007669"/>
    <property type="project" value="TreeGrafter"/>
</dbReference>
<dbReference type="GO" id="GO:0043024">
    <property type="term" value="F:ribosomal small subunit binding"/>
    <property type="evidence" value="ECO:0007669"/>
    <property type="project" value="TreeGrafter"/>
</dbReference>
<dbReference type="GO" id="GO:0045900">
    <property type="term" value="P:negative regulation of translational elongation"/>
    <property type="evidence" value="ECO:0007669"/>
    <property type="project" value="TreeGrafter"/>
</dbReference>
<dbReference type="CDD" id="cd00552">
    <property type="entry name" value="RaiA"/>
    <property type="match status" value="1"/>
</dbReference>
<dbReference type="FunFam" id="3.30.160.100:FF:000003">
    <property type="entry name" value="Ribosome hibernation promoting factor"/>
    <property type="match status" value="1"/>
</dbReference>
<dbReference type="FunFam" id="3.30.505.50:FF:000001">
    <property type="entry name" value="Ribosome hibernation promoting factor"/>
    <property type="match status" value="1"/>
</dbReference>
<dbReference type="Gene3D" id="3.30.160.100">
    <property type="entry name" value="Ribosome hibernation promotion factor-like"/>
    <property type="match status" value="1"/>
</dbReference>
<dbReference type="Gene3D" id="3.30.505.50">
    <property type="entry name" value="Sigma 54 modulation/S30EA ribosomal protein, C-terminal domain"/>
    <property type="match status" value="1"/>
</dbReference>
<dbReference type="HAMAP" id="MF_00839">
    <property type="entry name" value="HPF"/>
    <property type="match status" value="1"/>
</dbReference>
<dbReference type="InterPro" id="IPR050574">
    <property type="entry name" value="HPF/YfiA_ribosome-assoc"/>
</dbReference>
<dbReference type="InterPro" id="IPR034694">
    <property type="entry name" value="HPF_long/plastid"/>
</dbReference>
<dbReference type="InterPro" id="IPR036567">
    <property type="entry name" value="RHF-like"/>
</dbReference>
<dbReference type="InterPro" id="IPR003489">
    <property type="entry name" value="RHF/RaiA"/>
</dbReference>
<dbReference type="InterPro" id="IPR032528">
    <property type="entry name" value="Ribosom_S30AE_C"/>
</dbReference>
<dbReference type="InterPro" id="IPR038416">
    <property type="entry name" value="Ribosom_S30AE_C_sf"/>
</dbReference>
<dbReference type="NCBIfam" id="TIGR00741">
    <property type="entry name" value="yfiA"/>
    <property type="match status" value="1"/>
</dbReference>
<dbReference type="PANTHER" id="PTHR33231">
    <property type="entry name" value="30S RIBOSOMAL PROTEIN"/>
    <property type="match status" value="1"/>
</dbReference>
<dbReference type="PANTHER" id="PTHR33231:SF1">
    <property type="entry name" value="30S RIBOSOMAL PROTEIN"/>
    <property type="match status" value="1"/>
</dbReference>
<dbReference type="Pfam" id="PF16321">
    <property type="entry name" value="Ribosom_S30AE_C"/>
    <property type="match status" value="1"/>
</dbReference>
<dbReference type="Pfam" id="PF02482">
    <property type="entry name" value="Ribosomal_S30AE"/>
    <property type="match status" value="1"/>
</dbReference>
<dbReference type="SUPFAM" id="SSF69754">
    <property type="entry name" value="Ribosome binding protein Y (YfiA homologue)"/>
    <property type="match status" value="1"/>
</dbReference>
<comment type="function">
    <text evidence="1">Required for dimerization of active 70S ribosomes into 100S ribosomes in stationary phase; 100S ribosomes are translationally inactive and sometimes present during exponential growth.</text>
</comment>
<comment type="subunit">
    <text evidence="1">Interacts with 100S ribosomes.</text>
</comment>
<comment type="subcellular location">
    <subcellularLocation>
        <location evidence="1">Cytoplasm</location>
    </subcellularLocation>
</comment>
<comment type="similarity">
    <text evidence="1">Belongs to the HPF/YfiA ribosome-associated protein family. Long HPF subfamily.</text>
</comment>
<keyword id="KW-0002">3D-structure</keyword>
<keyword id="KW-0963">Cytoplasm</keyword>
<keyword id="KW-0810">Translation regulation</keyword>